<organism>
    <name type="scientific">Salmonella agona (strain SL483)</name>
    <dbReference type="NCBI Taxonomy" id="454166"/>
    <lineage>
        <taxon>Bacteria</taxon>
        <taxon>Pseudomonadati</taxon>
        <taxon>Pseudomonadota</taxon>
        <taxon>Gammaproteobacteria</taxon>
        <taxon>Enterobacterales</taxon>
        <taxon>Enterobacteriaceae</taxon>
        <taxon>Salmonella</taxon>
    </lineage>
</organism>
<dbReference type="EC" id="4.4.1.15" evidence="1"/>
<dbReference type="EMBL" id="CP001138">
    <property type="protein sequence ID" value="ACH51601.1"/>
    <property type="molecule type" value="Genomic_DNA"/>
</dbReference>
<dbReference type="RefSeq" id="WP_001128188.1">
    <property type="nucleotide sequence ID" value="NC_011149.1"/>
</dbReference>
<dbReference type="SMR" id="B5F2T4"/>
<dbReference type="KEGG" id="sea:SeAg_B1167"/>
<dbReference type="HOGENOM" id="CLU_048897_1_0_6"/>
<dbReference type="Proteomes" id="UP000008819">
    <property type="component" value="Chromosome"/>
</dbReference>
<dbReference type="GO" id="GO:0019148">
    <property type="term" value="F:D-cysteine desulfhydrase activity"/>
    <property type="evidence" value="ECO:0007669"/>
    <property type="project" value="UniProtKB-UniRule"/>
</dbReference>
<dbReference type="GO" id="GO:0046416">
    <property type="term" value="P:D-amino acid metabolic process"/>
    <property type="evidence" value="ECO:0007669"/>
    <property type="project" value="UniProtKB-UniRule"/>
</dbReference>
<dbReference type="CDD" id="cd06449">
    <property type="entry name" value="ACCD"/>
    <property type="match status" value="1"/>
</dbReference>
<dbReference type="FunFam" id="3.40.50.1100:FF:000019">
    <property type="entry name" value="D-cysteine desulfhydrase"/>
    <property type="match status" value="1"/>
</dbReference>
<dbReference type="Gene3D" id="3.40.50.1100">
    <property type="match status" value="2"/>
</dbReference>
<dbReference type="HAMAP" id="MF_01045">
    <property type="entry name" value="D_Cys_desulfhydr"/>
    <property type="match status" value="1"/>
</dbReference>
<dbReference type="InterPro" id="IPR027278">
    <property type="entry name" value="ACCD_DCysDesulf"/>
</dbReference>
<dbReference type="InterPro" id="IPR005966">
    <property type="entry name" value="D-Cys_desShydrase"/>
</dbReference>
<dbReference type="InterPro" id="IPR023702">
    <property type="entry name" value="D_Cys_desulphydr_bac"/>
</dbReference>
<dbReference type="InterPro" id="IPR001926">
    <property type="entry name" value="TrpB-like_PALP"/>
</dbReference>
<dbReference type="InterPro" id="IPR036052">
    <property type="entry name" value="TrpB-like_PALP_sf"/>
</dbReference>
<dbReference type="NCBIfam" id="TIGR01275">
    <property type="entry name" value="ACC_deam_rel"/>
    <property type="match status" value="1"/>
</dbReference>
<dbReference type="NCBIfam" id="NF003029">
    <property type="entry name" value="PRK03910.1-1"/>
    <property type="match status" value="1"/>
</dbReference>
<dbReference type="NCBIfam" id="NF003030">
    <property type="entry name" value="PRK03910.1-3"/>
    <property type="match status" value="1"/>
</dbReference>
<dbReference type="NCBIfam" id="NF003032">
    <property type="entry name" value="PRK03910.1-5"/>
    <property type="match status" value="1"/>
</dbReference>
<dbReference type="PANTHER" id="PTHR43780">
    <property type="entry name" value="1-AMINOCYCLOPROPANE-1-CARBOXYLATE DEAMINASE-RELATED"/>
    <property type="match status" value="1"/>
</dbReference>
<dbReference type="PANTHER" id="PTHR43780:SF2">
    <property type="entry name" value="1-AMINOCYCLOPROPANE-1-CARBOXYLATE DEAMINASE-RELATED"/>
    <property type="match status" value="1"/>
</dbReference>
<dbReference type="Pfam" id="PF00291">
    <property type="entry name" value="PALP"/>
    <property type="match status" value="1"/>
</dbReference>
<dbReference type="PIRSF" id="PIRSF006278">
    <property type="entry name" value="ACCD_DCysDesulf"/>
    <property type="match status" value="1"/>
</dbReference>
<dbReference type="SUPFAM" id="SSF53686">
    <property type="entry name" value="Tryptophan synthase beta subunit-like PLP-dependent enzymes"/>
    <property type="match status" value="1"/>
</dbReference>
<gene>
    <name evidence="1" type="primary">dcyD</name>
    <name type="ordered locus">SeAg_B1167</name>
</gene>
<accession>B5F2T4</accession>
<proteinExistence type="inferred from homology"/>
<keyword id="KW-0456">Lyase</keyword>
<keyword id="KW-0663">Pyridoxal phosphate</keyword>
<comment type="function">
    <text evidence="1">Catalyzes the alpha,beta-elimination reaction of D-cysteine and of several D-cysteine derivatives. It could be a defense mechanism against D-cysteine.</text>
</comment>
<comment type="catalytic activity">
    <reaction evidence="1">
        <text>D-cysteine + H2O = hydrogen sulfide + pyruvate + NH4(+) + H(+)</text>
        <dbReference type="Rhea" id="RHEA:11268"/>
        <dbReference type="ChEBI" id="CHEBI:15361"/>
        <dbReference type="ChEBI" id="CHEBI:15377"/>
        <dbReference type="ChEBI" id="CHEBI:15378"/>
        <dbReference type="ChEBI" id="CHEBI:28938"/>
        <dbReference type="ChEBI" id="CHEBI:29919"/>
        <dbReference type="ChEBI" id="CHEBI:35236"/>
        <dbReference type="EC" id="4.4.1.15"/>
    </reaction>
</comment>
<comment type="cofactor">
    <cofactor evidence="1">
        <name>pyridoxal 5'-phosphate</name>
        <dbReference type="ChEBI" id="CHEBI:597326"/>
    </cofactor>
</comment>
<comment type="subunit">
    <text evidence="1">Homodimer.</text>
</comment>
<comment type="similarity">
    <text evidence="1">Belongs to the ACC deaminase/D-cysteine desulfhydrase family.</text>
</comment>
<evidence type="ECO:0000255" key="1">
    <source>
        <dbReference type="HAMAP-Rule" id="MF_01045"/>
    </source>
</evidence>
<protein>
    <recommendedName>
        <fullName evidence="1">D-cysteine desulfhydrase</fullName>
        <ecNumber evidence="1">4.4.1.15</ecNumber>
    </recommendedName>
</protein>
<reference key="1">
    <citation type="journal article" date="2011" name="J. Bacteriol.">
        <title>Comparative genomics of 28 Salmonella enterica isolates: evidence for CRISPR-mediated adaptive sublineage evolution.</title>
        <authorList>
            <person name="Fricke W.F."/>
            <person name="Mammel M.K."/>
            <person name="McDermott P.F."/>
            <person name="Tartera C."/>
            <person name="White D.G."/>
            <person name="Leclerc J.E."/>
            <person name="Ravel J."/>
            <person name="Cebula T.A."/>
        </authorList>
    </citation>
    <scope>NUCLEOTIDE SEQUENCE [LARGE SCALE GENOMIC DNA]</scope>
    <source>
        <strain>SL483</strain>
    </source>
</reference>
<name>DCYD_SALA4</name>
<sequence length="328" mass="34877">MPLHHLTRFPRLELIGAPTPLEYLPRLSDYLGREIYIKRDDVTPIAMGGNKLRKLEFLVADALREGADTLITAGAIQSNHVRQTAAVAAKLGLHCVALLENPIGTTAENYLTNGNRLLLDLFNTQIEMCDALTDPDAQLQTLATRIEAQGFRPYVIPVGGSSALGAMGYVESALEIAQQCEEVVGLSSVVVASGSAGTHAGLAVGLEHLMPDVELIGVTVSRSVAEQKPKVIALQQAIAGQLALTATADIHLWDDYFAPGYGVPNDAGMEAVKLLASLEGVLLDPVYTGKAMAGLIDGISQKRFNDDGPILFIHTGGAPALFAYHPHV</sequence>
<feature type="chain" id="PRO_1000136165" description="D-cysteine desulfhydrase">
    <location>
        <begin position="1"/>
        <end position="328"/>
    </location>
</feature>
<feature type="modified residue" description="N6-(pyridoxal phosphate)lysine" evidence="1">
    <location>
        <position position="51"/>
    </location>
</feature>